<comment type="function">
    <text evidence="1">Required for rescue of stalled ribosomes mediated by trans-translation. Binds to transfer-messenger RNA (tmRNA), required for stable association of tmRNA with ribosomes. tmRNA and SmpB together mimic tRNA shape, replacing the anticodon stem-loop with SmpB. tmRNA is encoded by the ssrA gene; the 2 termini fold to resemble tRNA(Ala) and it encodes a 'tag peptide', a short internal open reading frame. During trans-translation Ala-aminoacylated tmRNA acts like a tRNA, entering the A-site of stalled ribosomes, displacing the stalled mRNA. The ribosome then switches to translate the ORF on the tmRNA; the nascent peptide is terminated with the 'tag peptide' encoded by the tmRNA and targeted for degradation. The ribosome is freed to recommence translation, which seems to be the essential function of trans-translation.</text>
</comment>
<comment type="subcellular location">
    <subcellularLocation>
        <location evidence="1">Cytoplasm</location>
    </subcellularLocation>
    <text evidence="1">The tmRNA-SmpB complex associates with stalled 70S ribosomes.</text>
</comment>
<comment type="similarity">
    <text evidence="1">Belongs to the SmpB family.</text>
</comment>
<evidence type="ECO:0000255" key="1">
    <source>
        <dbReference type="HAMAP-Rule" id="MF_00023"/>
    </source>
</evidence>
<evidence type="ECO:0000256" key="2">
    <source>
        <dbReference type="SAM" id="MobiDB-lite"/>
    </source>
</evidence>
<reference key="1">
    <citation type="submission" date="2006-12" db="EMBL/GenBank/DDBJ databases">
        <title>Complete sequence of chromosome 1 of Verminephrobacter eiseniae EF01-2.</title>
        <authorList>
            <person name="Copeland A."/>
            <person name="Lucas S."/>
            <person name="Lapidus A."/>
            <person name="Barry K."/>
            <person name="Detter J.C."/>
            <person name="Glavina del Rio T."/>
            <person name="Dalin E."/>
            <person name="Tice H."/>
            <person name="Pitluck S."/>
            <person name="Chertkov O."/>
            <person name="Brettin T."/>
            <person name="Bruce D."/>
            <person name="Han C."/>
            <person name="Tapia R."/>
            <person name="Gilna P."/>
            <person name="Schmutz J."/>
            <person name="Larimer F."/>
            <person name="Land M."/>
            <person name="Hauser L."/>
            <person name="Kyrpides N."/>
            <person name="Kim E."/>
            <person name="Stahl D."/>
            <person name="Richardson P."/>
        </authorList>
    </citation>
    <scope>NUCLEOTIDE SEQUENCE [LARGE SCALE GENOMIC DNA]</scope>
    <source>
        <strain>EF01-2</strain>
    </source>
</reference>
<feature type="chain" id="PRO_1000002181" description="SsrA-binding protein">
    <location>
        <begin position="1"/>
        <end position="157"/>
    </location>
</feature>
<feature type="region of interest" description="Disordered" evidence="2">
    <location>
        <begin position="133"/>
        <end position="157"/>
    </location>
</feature>
<accession>A1WPQ3</accession>
<dbReference type="EMBL" id="CP000542">
    <property type="protein sequence ID" value="ABM59610.1"/>
    <property type="molecule type" value="Genomic_DNA"/>
</dbReference>
<dbReference type="RefSeq" id="WP_011811597.1">
    <property type="nucleotide sequence ID" value="NC_008786.1"/>
</dbReference>
<dbReference type="SMR" id="A1WPQ3"/>
<dbReference type="STRING" id="391735.Veis_3903"/>
<dbReference type="GeneID" id="76462253"/>
<dbReference type="KEGG" id="vei:Veis_3903"/>
<dbReference type="eggNOG" id="COG0691">
    <property type="taxonomic scope" value="Bacteria"/>
</dbReference>
<dbReference type="HOGENOM" id="CLU_108953_3_0_4"/>
<dbReference type="OrthoDB" id="9805462at2"/>
<dbReference type="Proteomes" id="UP000000374">
    <property type="component" value="Chromosome"/>
</dbReference>
<dbReference type="GO" id="GO:0005829">
    <property type="term" value="C:cytosol"/>
    <property type="evidence" value="ECO:0007669"/>
    <property type="project" value="TreeGrafter"/>
</dbReference>
<dbReference type="GO" id="GO:0003723">
    <property type="term" value="F:RNA binding"/>
    <property type="evidence" value="ECO:0007669"/>
    <property type="project" value="UniProtKB-UniRule"/>
</dbReference>
<dbReference type="GO" id="GO:0070929">
    <property type="term" value="P:trans-translation"/>
    <property type="evidence" value="ECO:0007669"/>
    <property type="project" value="UniProtKB-UniRule"/>
</dbReference>
<dbReference type="CDD" id="cd09294">
    <property type="entry name" value="SmpB"/>
    <property type="match status" value="1"/>
</dbReference>
<dbReference type="Gene3D" id="2.40.280.10">
    <property type="match status" value="1"/>
</dbReference>
<dbReference type="HAMAP" id="MF_00023">
    <property type="entry name" value="SmpB"/>
    <property type="match status" value="1"/>
</dbReference>
<dbReference type="InterPro" id="IPR023620">
    <property type="entry name" value="SmpB"/>
</dbReference>
<dbReference type="InterPro" id="IPR000037">
    <property type="entry name" value="SsrA-bd_prot"/>
</dbReference>
<dbReference type="InterPro" id="IPR020081">
    <property type="entry name" value="SsrA-bd_prot_CS"/>
</dbReference>
<dbReference type="NCBIfam" id="NF003843">
    <property type="entry name" value="PRK05422.1"/>
    <property type="match status" value="1"/>
</dbReference>
<dbReference type="NCBIfam" id="TIGR00086">
    <property type="entry name" value="smpB"/>
    <property type="match status" value="1"/>
</dbReference>
<dbReference type="PANTHER" id="PTHR30308:SF2">
    <property type="entry name" value="SSRA-BINDING PROTEIN"/>
    <property type="match status" value="1"/>
</dbReference>
<dbReference type="PANTHER" id="PTHR30308">
    <property type="entry name" value="TMRNA-BINDING COMPONENT OF TRANS-TRANSLATION TAGGING COMPLEX"/>
    <property type="match status" value="1"/>
</dbReference>
<dbReference type="Pfam" id="PF01668">
    <property type="entry name" value="SmpB"/>
    <property type="match status" value="1"/>
</dbReference>
<dbReference type="SUPFAM" id="SSF74982">
    <property type="entry name" value="Small protein B (SmpB)"/>
    <property type="match status" value="1"/>
</dbReference>
<dbReference type="PROSITE" id="PS01317">
    <property type="entry name" value="SSRP"/>
    <property type="match status" value="1"/>
</dbReference>
<organism>
    <name type="scientific">Verminephrobacter eiseniae (strain EF01-2)</name>
    <dbReference type="NCBI Taxonomy" id="391735"/>
    <lineage>
        <taxon>Bacteria</taxon>
        <taxon>Pseudomonadati</taxon>
        <taxon>Pseudomonadota</taxon>
        <taxon>Betaproteobacteria</taxon>
        <taxon>Burkholderiales</taxon>
        <taxon>Comamonadaceae</taxon>
        <taxon>Verminephrobacter</taxon>
    </lineage>
</organism>
<protein>
    <recommendedName>
        <fullName evidence="1">SsrA-binding protein</fullName>
    </recommendedName>
    <alternativeName>
        <fullName evidence="1">Small protein B</fullName>
    </alternativeName>
</protein>
<keyword id="KW-0963">Cytoplasm</keyword>
<keyword id="KW-1185">Reference proteome</keyword>
<keyword id="KW-0694">RNA-binding</keyword>
<proteinExistence type="inferred from homology"/>
<gene>
    <name evidence="1" type="primary">smpB</name>
    <name type="ordered locus">Veis_3903</name>
</gene>
<name>SSRP_VEREI</name>
<sequence>MTKKPDPASRIADNKKAAHDYFLEERYEAGMVLHGWEVKALRAGKAQLTDGYVLIRDGELFLLGCQLQALKTASTHVSPEAARTKKLLLKKDDIRRLIGKVEQKGYTLVPLNLHWKNGVVKCEIALARGKAQHDKRNSIKEREGKREVERALKSRSR</sequence>